<accession>B2AGB7</accession>
<evidence type="ECO:0000255" key="1">
    <source>
        <dbReference type="HAMAP-Rule" id="MF_00249"/>
    </source>
</evidence>
<evidence type="ECO:0000256" key="2">
    <source>
        <dbReference type="SAM" id="MobiDB-lite"/>
    </source>
</evidence>
<feature type="chain" id="PRO_1000100943" description="ATP-dependent protease ATPase subunit HslU">
    <location>
        <begin position="1"/>
        <end position="443"/>
    </location>
</feature>
<feature type="region of interest" description="Disordered" evidence="2">
    <location>
        <begin position="139"/>
        <end position="158"/>
    </location>
</feature>
<feature type="binding site" evidence="1">
    <location>
        <position position="19"/>
    </location>
    <ligand>
        <name>ATP</name>
        <dbReference type="ChEBI" id="CHEBI:30616"/>
    </ligand>
</feature>
<feature type="binding site" evidence="1">
    <location>
        <begin position="61"/>
        <end position="66"/>
    </location>
    <ligand>
        <name>ATP</name>
        <dbReference type="ChEBI" id="CHEBI:30616"/>
    </ligand>
</feature>
<feature type="binding site" evidence="1">
    <location>
        <position position="256"/>
    </location>
    <ligand>
        <name>ATP</name>
        <dbReference type="ChEBI" id="CHEBI:30616"/>
    </ligand>
</feature>
<feature type="binding site" evidence="1">
    <location>
        <position position="321"/>
    </location>
    <ligand>
        <name>ATP</name>
        <dbReference type="ChEBI" id="CHEBI:30616"/>
    </ligand>
</feature>
<feature type="binding site" evidence="1">
    <location>
        <position position="393"/>
    </location>
    <ligand>
        <name>ATP</name>
        <dbReference type="ChEBI" id="CHEBI:30616"/>
    </ligand>
</feature>
<proteinExistence type="inferred from homology"/>
<gene>
    <name evidence="1" type="primary">hslU</name>
    <name type="ordered locus">RALTA_A0143</name>
</gene>
<organism>
    <name type="scientific">Cupriavidus taiwanensis (strain DSM 17343 / BCRC 17206 / CCUG 44338 / CIP 107171 / LMG 19424 / R1)</name>
    <name type="common">Ralstonia taiwanensis (strain LMG 19424)</name>
    <dbReference type="NCBI Taxonomy" id="977880"/>
    <lineage>
        <taxon>Bacteria</taxon>
        <taxon>Pseudomonadati</taxon>
        <taxon>Pseudomonadota</taxon>
        <taxon>Betaproteobacteria</taxon>
        <taxon>Burkholderiales</taxon>
        <taxon>Burkholderiaceae</taxon>
        <taxon>Cupriavidus</taxon>
    </lineage>
</organism>
<keyword id="KW-0067">ATP-binding</keyword>
<keyword id="KW-0143">Chaperone</keyword>
<keyword id="KW-0963">Cytoplasm</keyword>
<keyword id="KW-0547">Nucleotide-binding</keyword>
<dbReference type="EMBL" id="CU633749">
    <property type="protein sequence ID" value="CAP62816.1"/>
    <property type="molecule type" value="Genomic_DNA"/>
</dbReference>
<dbReference type="RefSeq" id="WP_012351484.1">
    <property type="nucleotide sequence ID" value="NC_010528.1"/>
</dbReference>
<dbReference type="SMR" id="B2AGB7"/>
<dbReference type="GeneID" id="29761895"/>
<dbReference type="KEGG" id="cti:RALTA_A0143"/>
<dbReference type="eggNOG" id="COG1220">
    <property type="taxonomic scope" value="Bacteria"/>
</dbReference>
<dbReference type="HOGENOM" id="CLU_033123_0_0_4"/>
<dbReference type="BioCyc" id="CTAI977880:RALTA_RS00710-MONOMER"/>
<dbReference type="Proteomes" id="UP000001692">
    <property type="component" value="Chromosome 1"/>
</dbReference>
<dbReference type="GO" id="GO:0009376">
    <property type="term" value="C:HslUV protease complex"/>
    <property type="evidence" value="ECO:0007669"/>
    <property type="project" value="UniProtKB-UniRule"/>
</dbReference>
<dbReference type="GO" id="GO:0005524">
    <property type="term" value="F:ATP binding"/>
    <property type="evidence" value="ECO:0007669"/>
    <property type="project" value="UniProtKB-UniRule"/>
</dbReference>
<dbReference type="GO" id="GO:0016887">
    <property type="term" value="F:ATP hydrolysis activity"/>
    <property type="evidence" value="ECO:0007669"/>
    <property type="project" value="InterPro"/>
</dbReference>
<dbReference type="GO" id="GO:0008233">
    <property type="term" value="F:peptidase activity"/>
    <property type="evidence" value="ECO:0007669"/>
    <property type="project" value="InterPro"/>
</dbReference>
<dbReference type="GO" id="GO:0036402">
    <property type="term" value="F:proteasome-activating activity"/>
    <property type="evidence" value="ECO:0007669"/>
    <property type="project" value="UniProtKB-UniRule"/>
</dbReference>
<dbReference type="GO" id="GO:0043335">
    <property type="term" value="P:protein unfolding"/>
    <property type="evidence" value="ECO:0007669"/>
    <property type="project" value="UniProtKB-UniRule"/>
</dbReference>
<dbReference type="GO" id="GO:0051603">
    <property type="term" value="P:proteolysis involved in protein catabolic process"/>
    <property type="evidence" value="ECO:0007669"/>
    <property type="project" value="TreeGrafter"/>
</dbReference>
<dbReference type="CDD" id="cd19498">
    <property type="entry name" value="RecA-like_HslU"/>
    <property type="match status" value="1"/>
</dbReference>
<dbReference type="FunFam" id="1.10.8.10:FF:000028">
    <property type="entry name" value="ATP-dependent protease ATPase subunit HslU"/>
    <property type="match status" value="1"/>
</dbReference>
<dbReference type="FunFam" id="3.40.50.300:FF:000213">
    <property type="entry name" value="ATP-dependent protease ATPase subunit HslU"/>
    <property type="match status" value="1"/>
</dbReference>
<dbReference type="FunFam" id="3.40.50.300:FF:000220">
    <property type="entry name" value="ATP-dependent protease ATPase subunit HslU"/>
    <property type="match status" value="1"/>
</dbReference>
<dbReference type="Gene3D" id="1.10.8.60">
    <property type="match status" value="1"/>
</dbReference>
<dbReference type="Gene3D" id="1.10.8.10">
    <property type="entry name" value="DNA helicase RuvA subunit, C-terminal domain"/>
    <property type="match status" value="1"/>
</dbReference>
<dbReference type="Gene3D" id="3.40.50.300">
    <property type="entry name" value="P-loop containing nucleotide triphosphate hydrolases"/>
    <property type="match status" value="2"/>
</dbReference>
<dbReference type="HAMAP" id="MF_00249">
    <property type="entry name" value="HslU"/>
    <property type="match status" value="1"/>
</dbReference>
<dbReference type="InterPro" id="IPR003593">
    <property type="entry name" value="AAA+_ATPase"/>
</dbReference>
<dbReference type="InterPro" id="IPR050052">
    <property type="entry name" value="ATP-dep_Clp_protease_ClpX"/>
</dbReference>
<dbReference type="InterPro" id="IPR003959">
    <property type="entry name" value="ATPase_AAA_core"/>
</dbReference>
<dbReference type="InterPro" id="IPR019489">
    <property type="entry name" value="Clp_ATPase_C"/>
</dbReference>
<dbReference type="InterPro" id="IPR004491">
    <property type="entry name" value="HslU"/>
</dbReference>
<dbReference type="InterPro" id="IPR027417">
    <property type="entry name" value="P-loop_NTPase"/>
</dbReference>
<dbReference type="NCBIfam" id="TIGR00390">
    <property type="entry name" value="hslU"/>
    <property type="match status" value="1"/>
</dbReference>
<dbReference type="NCBIfam" id="NF003544">
    <property type="entry name" value="PRK05201.1"/>
    <property type="match status" value="1"/>
</dbReference>
<dbReference type="PANTHER" id="PTHR48102">
    <property type="entry name" value="ATP-DEPENDENT CLP PROTEASE ATP-BINDING SUBUNIT CLPX-LIKE, MITOCHONDRIAL-RELATED"/>
    <property type="match status" value="1"/>
</dbReference>
<dbReference type="PANTHER" id="PTHR48102:SF3">
    <property type="entry name" value="ATP-DEPENDENT PROTEASE ATPASE SUBUNIT HSLU"/>
    <property type="match status" value="1"/>
</dbReference>
<dbReference type="Pfam" id="PF00004">
    <property type="entry name" value="AAA"/>
    <property type="match status" value="1"/>
</dbReference>
<dbReference type="Pfam" id="PF07724">
    <property type="entry name" value="AAA_2"/>
    <property type="match status" value="1"/>
</dbReference>
<dbReference type="SMART" id="SM00382">
    <property type="entry name" value="AAA"/>
    <property type="match status" value="1"/>
</dbReference>
<dbReference type="SMART" id="SM01086">
    <property type="entry name" value="ClpB_D2-small"/>
    <property type="match status" value="1"/>
</dbReference>
<dbReference type="SUPFAM" id="SSF52540">
    <property type="entry name" value="P-loop containing nucleoside triphosphate hydrolases"/>
    <property type="match status" value="1"/>
</dbReference>
<reference key="1">
    <citation type="journal article" date="2008" name="Genome Res.">
        <title>Genome sequence of the beta-rhizobium Cupriavidus taiwanensis and comparative genomics of rhizobia.</title>
        <authorList>
            <person name="Amadou C."/>
            <person name="Pascal G."/>
            <person name="Mangenot S."/>
            <person name="Glew M."/>
            <person name="Bontemps C."/>
            <person name="Capela D."/>
            <person name="Carrere S."/>
            <person name="Cruveiller S."/>
            <person name="Dossat C."/>
            <person name="Lajus A."/>
            <person name="Marchetti M."/>
            <person name="Poinsot V."/>
            <person name="Rouy Z."/>
            <person name="Servin B."/>
            <person name="Saad M."/>
            <person name="Schenowitz C."/>
            <person name="Barbe V."/>
            <person name="Batut J."/>
            <person name="Medigue C."/>
            <person name="Masson-Boivin C."/>
        </authorList>
    </citation>
    <scope>NUCLEOTIDE SEQUENCE [LARGE SCALE GENOMIC DNA]</scope>
    <source>
        <strain>DSM 17343 / BCRC 17206 / CCUG 44338 / CIP 107171 / LMG 19424 / R1</strain>
    </source>
</reference>
<comment type="function">
    <text evidence="1">ATPase subunit of a proteasome-like degradation complex; this subunit has chaperone activity. The binding of ATP and its subsequent hydrolysis by HslU are essential for unfolding of protein substrates subsequently hydrolyzed by HslV. HslU recognizes the N-terminal part of its protein substrates and unfolds these before they are guided to HslV for hydrolysis.</text>
</comment>
<comment type="subunit">
    <text evidence="1">A double ring-shaped homohexamer of HslV is capped on each side by a ring-shaped HslU homohexamer. The assembly of the HslU/HslV complex is dependent on binding of ATP.</text>
</comment>
<comment type="subcellular location">
    <subcellularLocation>
        <location evidence="1">Cytoplasm</location>
    </subcellularLocation>
</comment>
<comment type="similarity">
    <text evidence="1">Belongs to the ClpX chaperone family. HslU subfamily.</text>
</comment>
<name>HSLU_CUPTR</name>
<sequence length="443" mass="49524">MSHTMTPSEIVSELDKHIIGQNKAKKAVAVALRNRWRRQQVAEPLRQEITPKNILMIGPTGVGKTEIARRLAKLADAPFIKIEATKFTEVGYVGRDVDTIVRDLAEMAIKQTRESEMKKVRTKAEDAAEDRLLDVLLPPPRDIGFSQPEEKDSNTRQVFRKKLREGQLDDKDIELEVSAGMPSMDIMGPPGMEDMTEQIRTMFAGLGQGKKARRKMKVKEAFKLLIDEEAAKLVNDEELKHKAIANVEQNGIVFLDEIDKIASRSDIGGGEVSRQGVQRDLLPLVEGTTVNTKYGMIKTDHILFIASGAFHLSKPSDLIPELQGRFPIRVELESLSVQDFEAILTQTDASLTKQYQALLNTEEVNLVFAPDGIRRLAEIAFSVNEKVENIGARRLYTVMERLLEDLSFHASKSSGETVTIDAAYVEERLGDLAGNEDLSRYVL</sequence>
<protein>
    <recommendedName>
        <fullName evidence="1">ATP-dependent protease ATPase subunit HslU</fullName>
    </recommendedName>
    <alternativeName>
        <fullName evidence="1">Unfoldase HslU</fullName>
    </alternativeName>
</protein>